<comment type="catalytic activity">
    <reaction evidence="1">
        <text>CMP + ATP = CDP + ADP</text>
        <dbReference type="Rhea" id="RHEA:11600"/>
        <dbReference type="ChEBI" id="CHEBI:30616"/>
        <dbReference type="ChEBI" id="CHEBI:58069"/>
        <dbReference type="ChEBI" id="CHEBI:60377"/>
        <dbReference type="ChEBI" id="CHEBI:456216"/>
        <dbReference type="EC" id="2.7.4.25"/>
    </reaction>
</comment>
<comment type="catalytic activity">
    <reaction evidence="1">
        <text>dCMP + ATP = dCDP + ADP</text>
        <dbReference type="Rhea" id="RHEA:25094"/>
        <dbReference type="ChEBI" id="CHEBI:30616"/>
        <dbReference type="ChEBI" id="CHEBI:57566"/>
        <dbReference type="ChEBI" id="CHEBI:58593"/>
        <dbReference type="ChEBI" id="CHEBI:456216"/>
        <dbReference type="EC" id="2.7.4.25"/>
    </reaction>
</comment>
<comment type="subcellular location">
    <subcellularLocation>
        <location evidence="1">Cytoplasm</location>
    </subcellularLocation>
</comment>
<comment type="similarity">
    <text evidence="1">Belongs to the cytidylate kinase family. Type 2 subfamily.</text>
</comment>
<evidence type="ECO:0000255" key="1">
    <source>
        <dbReference type="HAMAP-Rule" id="MF_00239"/>
    </source>
</evidence>
<sequence>MKIALSGKSGCGNTTVSSMIAKHYGLEFINYTFHDIARERNIPFSEFYEKEIIGRDDYYWDMYLDKRLSLLSKKNNTVLASRLAIWISKSADLKIYLYAKMEVRAERIMTREGGMYSDVLSSTFNRDENDKKRYLSIYNIDIDDYSSKTDLVIDVTNINSNEVFELIRDEIDKRNLKN</sequence>
<feature type="chain" id="PRO_0000132029" description="Cytidylate kinase 2">
    <location>
        <begin position="1"/>
        <end position="178"/>
    </location>
</feature>
<feature type="binding site" evidence="1">
    <location>
        <begin position="7"/>
        <end position="15"/>
    </location>
    <ligand>
        <name>ATP</name>
        <dbReference type="ChEBI" id="CHEBI:30616"/>
    </ligand>
</feature>
<name>KCY2_BORGP</name>
<keyword id="KW-0067">ATP-binding</keyword>
<keyword id="KW-0963">Cytoplasm</keyword>
<keyword id="KW-0418">Kinase</keyword>
<keyword id="KW-0547">Nucleotide-binding</keyword>
<keyword id="KW-0808">Transferase</keyword>
<proteinExistence type="inferred from homology"/>
<protein>
    <recommendedName>
        <fullName evidence="1">Cytidylate kinase 2</fullName>
        <shortName evidence="1">CK 2</shortName>
        <ecNumber evidence="1">2.7.4.25</ecNumber>
    </recommendedName>
    <alternativeName>
        <fullName evidence="1">Cytidine monophosphate kinase 2</fullName>
        <shortName evidence="1">CMP kinase 2</shortName>
    </alternativeName>
</protein>
<accession>Q65ZV5</accession>
<organism>
    <name type="scientific">Borrelia garinii subsp. bavariensis (strain ATCC BAA-2496 / DSM 23469 / PBi)</name>
    <name type="common">Borreliella bavariensis</name>
    <dbReference type="NCBI Taxonomy" id="290434"/>
    <lineage>
        <taxon>Bacteria</taxon>
        <taxon>Pseudomonadati</taxon>
        <taxon>Spirochaetota</taxon>
        <taxon>Spirochaetia</taxon>
        <taxon>Spirochaetales</taxon>
        <taxon>Borreliaceae</taxon>
        <taxon>Borreliella</taxon>
    </lineage>
</organism>
<dbReference type="EC" id="2.7.4.25" evidence="1"/>
<dbReference type="EMBL" id="CP000013">
    <property type="protein sequence ID" value="AAU07666.1"/>
    <property type="molecule type" value="Genomic_DNA"/>
</dbReference>
<dbReference type="SMR" id="Q65ZV5"/>
<dbReference type="GeneID" id="45161618"/>
<dbReference type="KEGG" id="bga:BG0844"/>
<dbReference type="eggNOG" id="COG1102">
    <property type="taxonomic scope" value="Bacteria"/>
</dbReference>
<dbReference type="HOGENOM" id="CLU_079959_1_0_12"/>
<dbReference type="OrthoDB" id="5291502at2"/>
<dbReference type="Proteomes" id="UP000002276">
    <property type="component" value="Chromosome"/>
</dbReference>
<dbReference type="GO" id="GO:0005737">
    <property type="term" value="C:cytoplasm"/>
    <property type="evidence" value="ECO:0007669"/>
    <property type="project" value="UniProtKB-SubCell"/>
</dbReference>
<dbReference type="GO" id="GO:0005524">
    <property type="term" value="F:ATP binding"/>
    <property type="evidence" value="ECO:0007669"/>
    <property type="project" value="UniProtKB-UniRule"/>
</dbReference>
<dbReference type="GO" id="GO:0036430">
    <property type="term" value="F:CMP kinase activity"/>
    <property type="evidence" value="ECO:0007669"/>
    <property type="project" value="RHEA"/>
</dbReference>
<dbReference type="GO" id="GO:0036431">
    <property type="term" value="F:dCMP kinase activity"/>
    <property type="evidence" value="ECO:0007669"/>
    <property type="project" value="RHEA"/>
</dbReference>
<dbReference type="GO" id="GO:0006220">
    <property type="term" value="P:pyrimidine nucleotide metabolic process"/>
    <property type="evidence" value="ECO:0007669"/>
    <property type="project" value="UniProtKB-UniRule"/>
</dbReference>
<dbReference type="CDD" id="cd02020">
    <property type="entry name" value="CMPK"/>
    <property type="match status" value="1"/>
</dbReference>
<dbReference type="Gene3D" id="3.40.50.300">
    <property type="entry name" value="P-loop containing nucleotide triphosphate hydrolases"/>
    <property type="match status" value="1"/>
</dbReference>
<dbReference type="HAMAP" id="MF_00239">
    <property type="entry name" value="Cytidyl_kinase_type2"/>
    <property type="match status" value="1"/>
</dbReference>
<dbReference type="InterPro" id="IPR011892">
    <property type="entry name" value="Cyt_kin_arch"/>
</dbReference>
<dbReference type="InterPro" id="IPR011994">
    <property type="entry name" value="Cytidylate_kinase_dom"/>
</dbReference>
<dbReference type="InterPro" id="IPR027417">
    <property type="entry name" value="P-loop_NTPase"/>
</dbReference>
<dbReference type="NCBIfam" id="TIGR02173">
    <property type="entry name" value="cyt_kin_arch"/>
    <property type="match status" value="1"/>
</dbReference>
<dbReference type="Pfam" id="PF13189">
    <property type="entry name" value="Cytidylate_kin2"/>
    <property type="match status" value="1"/>
</dbReference>
<dbReference type="SUPFAM" id="SSF52540">
    <property type="entry name" value="P-loop containing nucleoside triphosphate hydrolases"/>
    <property type="match status" value="1"/>
</dbReference>
<gene>
    <name evidence="1" type="primary">cmk2</name>
    <name type="ordered locus">BG0844</name>
</gene>
<reference key="1">
    <citation type="journal article" date="2004" name="Nucleic Acids Res.">
        <title>Comparative analysis of the Borrelia garinii genome.</title>
        <authorList>
            <person name="Gloeckner G."/>
            <person name="Lehmann R."/>
            <person name="Romualdi A."/>
            <person name="Pradella S."/>
            <person name="Schulte-Spechtel U."/>
            <person name="Schilhabel M."/>
            <person name="Wilske B."/>
            <person name="Suehnel J."/>
            <person name="Platzer M."/>
        </authorList>
    </citation>
    <scope>NUCLEOTIDE SEQUENCE [LARGE SCALE GENOMIC DNA]</scope>
    <source>
        <strain>ATCC BAA-2496 / DSM 23469 / PBi</strain>
    </source>
</reference>